<evidence type="ECO:0000250" key="1">
    <source>
        <dbReference type="UniProtKB" id="Q08J23"/>
    </source>
</evidence>
<evidence type="ECO:0000250" key="2">
    <source>
        <dbReference type="UniProtKB" id="Q1HFZ0"/>
    </source>
</evidence>
<evidence type="ECO:0000255" key="3">
    <source>
        <dbReference type="PROSITE-ProRule" id="PRU01023"/>
    </source>
</evidence>
<evidence type="ECO:0000256" key="4">
    <source>
        <dbReference type="SAM" id="MobiDB-lite"/>
    </source>
</evidence>
<evidence type="ECO:0000303" key="5">
    <source ref="1"/>
</evidence>
<evidence type="ECO:0000305" key="6"/>
<reference key="1">
    <citation type="submission" date="2006-10" db="EMBL/GenBank/DDBJ databases">
        <authorList>
            <consortium name="Sanger Xenopus tropicalis EST/cDNA project"/>
        </authorList>
    </citation>
    <scope>NUCLEOTIDE SEQUENCE [LARGE SCALE MRNA]</scope>
    <source>
        <tissue>Egg</tissue>
    </source>
</reference>
<accession>Q28E61</accession>
<protein>
    <recommendedName>
        <fullName evidence="6">RNA cytosine-C(5)-methyltransferase NSUN2</fullName>
        <ecNumber evidence="1">2.1.1.-</ecNumber>
    </recommendedName>
    <alternativeName>
        <fullName evidence="1">NOL1/NOP2/Sun domain family member 2</fullName>
    </alternativeName>
    <alternativeName>
        <fullName evidence="6">mRNA cytosine C(5)-methyltransferase</fullName>
        <ecNumber evidence="1">2.1.1.-</ecNumber>
    </alternativeName>
    <alternativeName>
        <fullName evidence="6">tRNA cytosine C(5)-methyltransferase</fullName>
        <ecNumber evidence="1">2.1.1.-</ecNumber>
        <ecNumber evidence="1">2.1.1.203</ecNumber>
    </alternativeName>
</protein>
<dbReference type="EC" id="2.1.1.-" evidence="1"/>
<dbReference type="EC" id="2.1.1.203" evidence="1"/>
<dbReference type="EMBL" id="CR848434">
    <property type="protein sequence ID" value="CAJ83692.1"/>
    <property type="molecule type" value="mRNA"/>
</dbReference>
<dbReference type="RefSeq" id="NP_001015962.1">
    <property type="nucleotide sequence ID" value="NM_001015962.2"/>
</dbReference>
<dbReference type="RefSeq" id="XP_012820119.1">
    <property type="nucleotide sequence ID" value="XM_012964665.3"/>
</dbReference>
<dbReference type="RefSeq" id="XP_012820120.1">
    <property type="nucleotide sequence ID" value="XM_012964666.3"/>
</dbReference>
<dbReference type="SMR" id="Q28E61"/>
<dbReference type="FunCoup" id="Q28E61">
    <property type="interactions" value="4510"/>
</dbReference>
<dbReference type="STRING" id="8364.ENSXETP00000015255"/>
<dbReference type="PaxDb" id="8364-ENSXETP00000059424"/>
<dbReference type="GeneID" id="548716"/>
<dbReference type="KEGG" id="xtr:548716"/>
<dbReference type="AGR" id="Xenbase:XB-GENE-962623"/>
<dbReference type="CTD" id="54888"/>
<dbReference type="Xenbase" id="XB-GENE-962623">
    <property type="gene designation" value="nsun2"/>
</dbReference>
<dbReference type="eggNOG" id="KOG2198">
    <property type="taxonomic scope" value="Eukaryota"/>
</dbReference>
<dbReference type="InParanoid" id="Q28E61"/>
<dbReference type="OMA" id="QLFTEYV"/>
<dbReference type="OrthoDB" id="6093671at2759"/>
<dbReference type="Proteomes" id="UP000008143">
    <property type="component" value="Chromosome 6"/>
</dbReference>
<dbReference type="Bgee" id="ENSXETG00000001732">
    <property type="expression patterns" value="Expressed in ovary and 12 other cell types or tissues"/>
</dbReference>
<dbReference type="ExpressionAtlas" id="Q28E61">
    <property type="expression patterns" value="baseline"/>
</dbReference>
<dbReference type="GO" id="GO:0070062">
    <property type="term" value="C:extracellular exosome"/>
    <property type="evidence" value="ECO:0000250"/>
    <property type="project" value="UniProtKB"/>
</dbReference>
<dbReference type="GO" id="GO:0005739">
    <property type="term" value="C:mitochondrion"/>
    <property type="evidence" value="ECO:0000250"/>
    <property type="project" value="UniProtKB"/>
</dbReference>
<dbReference type="GO" id="GO:0005730">
    <property type="term" value="C:nucleolus"/>
    <property type="evidence" value="ECO:0007669"/>
    <property type="project" value="UniProtKB-SubCell"/>
</dbReference>
<dbReference type="GO" id="GO:0005819">
    <property type="term" value="C:spindle"/>
    <property type="evidence" value="ECO:0007669"/>
    <property type="project" value="UniProtKB-SubCell"/>
</dbReference>
<dbReference type="GO" id="GO:0062152">
    <property type="term" value="F:mRNA (cytidine-5-)-methyltransferase activity"/>
    <property type="evidence" value="ECO:0000250"/>
    <property type="project" value="UniProtKB"/>
</dbReference>
<dbReference type="GO" id="GO:0016428">
    <property type="term" value="F:tRNA (cytidine-5-)-methyltransferase activity"/>
    <property type="evidence" value="ECO:0000250"/>
    <property type="project" value="UniProtKB"/>
</dbReference>
<dbReference type="GO" id="GO:0000049">
    <property type="term" value="F:tRNA binding"/>
    <property type="evidence" value="ECO:0007669"/>
    <property type="project" value="UniProtKB-KW"/>
</dbReference>
<dbReference type="GO" id="GO:0010793">
    <property type="term" value="P:regulation of mRNA export from nucleus"/>
    <property type="evidence" value="ECO:0000250"/>
    <property type="project" value="UniProtKB"/>
</dbReference>
<dbReference type="GO" id="GO:2000736">
    <property type="term" value="P:regulation of stem cell differentiation"/>
    <property type="evidence" value="ECO:0000250"/>
    <property type="project" value="UniProtKB"/>
</dbReference>
<dbReference type="GO" id="GO:0030488">
    <property type="term" value="P:tRNA methylation"/>
    <property type="evidence" value="ECO:0000250"/>
    <property type="project" value="UniProtKB"/>
</dbReference>
<dbReference type="GO" id="GO:0036416">
    <property type="term" value="P:tRNA stabilization"/>
    <property type="evidence" value="ECO:0000250"/>
    <property type="project" value="UniProtKB"/>
</dbReference>
<dbReference type="Gene3D" id="3.40.50.150">
    <property type="entry name" value="Vaccinia Virus protein VP39"/>
    <property type="match status" value="1"/>
</dbReference>
<dbReference type="InterPro" id="IPR049560">
    <property type="entry name" value="MeTrfase_RsmB-F_NOP2_cat"/>
</dbReference>
<dbReference type="InterPro" id="IPR001678">
    <property type="entry name" value="MeTrfase_RsmB-F_NOP2_dom"/>
</dbReference>
<dbReference type="InterPro" id="IPR023267">
    <property type="entry name" value="RCMT"/>
</dbReference>
<dbReference type="InterPro" id="IPR023270">
    <property type="entry name" value="RCMT_NCL1"/>
</dbReference>
<dbReference type="InterPro" id="IPR029063">
    <property type="entry name" value="SAM-dependent_MTases_sf"/>
</dbReference>
<dbReference type="PANTHER" id="PTHR22808">
    <property type="entry name" value="NCL1 YEAST -RELATED NOL1/NOP2/FMU SUN DOMAIN-CONTAINING"/>
    <property type="match status" value="1"/>
</dbReference>
<dbReference type="PANTHER" id="PTHR22808:SF1">
    <property type="entry name" value="RNA CYTOSINE-C(5)-METHYLTRANSFERASE NSUN2-RELATED"/>
    <property type="match status" value="1"/>
</dbReference>
<dbReference type="Pfam" id="PF01189">
    <property type="entry name" value="Methyltr_RsmB-F"/>
    <property type="match status" value="1"/>
</dbReference>
<dbReference type="Pfam" id="PF25376">
    <property type="entry name" value="Pre-PUA_NSUN2"/>
    <property type="match status" value="1"/>
</dbReference>
<dbReference type="Pfam" id="PF25378">
    <property type="entry name" value="PUA_NSUN2"/>
    <property type="match status" value="1"/>
</dbReference>
<dbReference type="PRINTS" id="PR02008">
    <property type="entry name" value="RCMTFAMILY"/>
</dbReference>
<dbReference type="PRINTS" id="PR02011">
    <property type="entry name" value="RCMTNCL1"/>
</dbReference>
<dbReference type="SUPFAM" id="SSF53335">
    <property type="entry name" value="S-adenosyl-L-methionine-dependent methyltransferases"/>
    <property type="match status" value="1"/>
</dbReference>
<dbReference type="PROSITE" id="PS51686">
    <property type="entry name" value="SAM_MT_RSMB_NOP"/>
    <property type="match status" value="1"/>
</dbReference>
<organism>
    <name type="scientific">Xenopus tropicalis</name>
    <name type="common">Western clawed frog</name>
    <name type="synonym">Silurana tropicalis</name>
    <dbReference type="NCBI Taxonomy" id="8364"/>
    <lineage>
        <taxon>Eukaryota</taxon>
        <taxon>Metazoa</taxon>
        <taxon>Chordata</taxon>
        <taxon>Craniata</taxon>
        <taxon>Vertebrata</taxon>
        <taxon>Euteleostomi</taxon>
        <taxon>Amphibia</taxon>
        <taxon>Batrachia</taxon>
        <taxon>Anura</taxon>
        <taxon>Pipoidea</taxon>
        <taxon>Pipidae</taxon>
        <taxon>Xenopodinae</taxon>
        <taxon>Xenopus</taxon>
        <taxon>Silurana</taxon>
    </lineage>
</organism>
<feature type="chain" id="PRO_0000289227" description="RNA cytosine-C(5)-methyltransferase NSUN2">
    <location>
        <begin position="1"/>
        <end position="798"/>
    </location>
</feature>
<feature type="region of interest" description="Disordered" evidence="4">
    <location>
        <begin position="1"/>
        <end position="30"/>
    </location>
</feature>
<feature type="region of interest" description="Disordered" evidence="4">
    <location>
        <begin position="476"/>
        <end position="499"/>
    </location>
</feature>
<feature type="region of interest" description="Disordered" evidence="4">
    <location>
        <begin position="723"/>
        <end position="798"/>
    </location>
</feature>
<feature type="compositionally biased region" description="Basic residues" evidence="4">
    <location>
        <begin position="1"/>
        <end position="13"/>
    </location>
</feature>
<feature type="compositionally biased region" description="Basic and acidic residues" evidence="4">
    <location>
        <begin position="14"/>
        <end position="30"/>
    </location>
</feature>
<feature type="compositionally biased region" description="Basic and acidic residues" evidence="4">
    <location>
        <begin position="723"/>
        <end position="747"/>
    </location>
</feature>
<feature type="compositionally biased region" description="Acidic residues" evidence="4">
    <location>
        <begin position="751"/>
        <end position="762"/>
    </location>
</feature>
<feature type="compositionally biased region" description="Basic and acidic residues" evidence="4">
    <location>
        <begin position="763"/>
        <end position="772"/>
    </location>
</feature>
<feature type="active site" description="Nucleophile" evidence="3">
    <location>
        <position position="323"/>
    </location>
</feature>
<feature type="binding site" evidence="3">
    <location>
        <begin position="186"/>
        <end position="192"/>
    </location>
    <ligand>
        <name>S-adenosyl-L-methionine</name>
        <dbReference type="ChEBI" id="CHEBI:59789"/>
    </ligand>
</feature>
<feature type="binding site" evidence="3">
    <location>
        <position position="217"/>
    </location>
    <ligand>
        <name>S-adenosyl-L-methionine</name>
        <dbReference type="ChEBI" id="CHEBI:59789"/>
    </ligand>
</feature>
<feature type="binding site" evidence="3">
    <location>
        <position position="244"/>
    </location>
    <ligand>
        <name>S-adenosyl-L-methionine</name>
        <dbReference type="ChEBI" id="CHEBI:59789"/>
    </ligand>
</feature>
<feature type="binding site" evidence="3">
    <location>
        <position position="270"/>
    </location>
    <ligand>
        <name>S-adenosyl-L-methionine</name>
        <dbReference type="ChEBI" id="CHEBI:59789"/>
    </ligand>
</feature>
<comment type="function">
    <text evidence="1">RNA cytosine C(5)-methyltransferase that methylates cytosine to 5-methylcytosine (m5C) in various RNAs, such as tRNAs, mRNAs and some long non-coding RNAs (lncRNAs). Involved in various processes, such as epidermal stem cell differentiation, testis differentiation and maternal to zygotic transition during early development: acts by increasing protein synthesis; cytosine C(5)-methylation promoting tRNA stability and preventing mRNA decay. Methylates cytosine to 5-methylcytosine (m5C) at positions 34 and 48 of intron-containing tRNA(Leu)(CAA) precursors, and at positions 48, 49 and 50 of tRNA(Gly)(GCC) precursors. tRNA methylation is required generation of RNA fragments derived from tRNAs (tRFs). Also mediates C(5)-methylation of mitochondrial tRNAs. Catalyzes cytosine C(5)-methylation of mRNAs, leading to stabilize them and prevent mRNA decay. Cytosine C(5)-methylation of mRNAs also regulates mRNA export. Also mediates cytosine C(5)-methylation of non-coding RNAs, such as vault RNAs (vtRNAs), promoting their processing into regulatory small RNAs. Required for proper spindle assembly and chromosome segregation, independently of its methyltransferase activity.</text>
</comment>
<comment type="catalytic activity">
    <reaction evidence="1">
        <text>cytidine(48) in tRNA + S-adenosyl-L-methionine = 5-methylcytidine(48) in tRNA + S-adenosyl-L-homocysteine + H(+)</text>
        <dbReference type="Rhea" id="RHEA:42948"/>
        <dbReference type="Rhea" id="RHEA-COMP:10293"/>
        <dbReference type="Rhea" id="RHEA-COMP:10297"/>
        <dbReference type="ChEBI" id="CHEBI:15378"/>
        <dbReference type="ChEBI" id="CHEBI:57856"/>
        <dbReference type="ChEBI" id="CHEBI:59789"/>
        <dbReference type="ChEBI" id="CHEBI:74483"/>
        <dbReference type="ChEBI" id="CHEBI:82748"/>
    </reaction>
    <physiologicalReaction direction="left-to-right" evidence="1">
        <dbReference type="Rhea" id="RHEA:42949"/>
    </physiologicalReaction>
</comment>
<comment type="catalytic activity">
    <reaction evidence="1">
        <text>cytidine(49) in tRNA + S-adenosyl-L-methionine = 5-methylcytidine(49) in tRNA + S-adenosyl-L-homocysteine + H(+)</text>
        <dbReference type="Rhea" id="RHEA:42952"/>
        <dbReference type="Rhea" id="RHEA-COMP:10294"/>
        <dbReference type="Rhea" id="RHEA-COMP:10385"/>
        <dbReference type="ChEBI" id="CHEBI:15378"/>
        <dbReference type="ChEBI" id="CHEBI:57856"/>
        <dbReference type="ChEBI" id="CHEBI:59789"/>
        <dbReference type="ChEBI" id="CHEBI:74483"/>
        <dbReference type="ChEBI" id="CHEBI:82748"/>
    </reaction>
    <physiologicalReaction direction="left-to-right" evidence="1">
        <dbReference type="Rhea" id="RHEA:42953"/>
    </physiologicalReaction>
</comment>
<comment type="catalytic activity">
    <reaction evidence="1">
        <text>cytidine(50) in tRNA + S-adenosyl-L-methionine = 5-methylcytidine(50) in tRNA + S-adenosyl-L-homocysteine + H(+)</text>
        <dbReference type="Rhea" id="RHEA:61488"/>
        <dbReference type="Rhea" id="RHEA-COMP:15838"/>
        <dbReference type="Rhea" id="RHEA-COMP:15839"/>
        <dbReference type="ChEBI" id="CHEBI:15378"/>
        <dbReference type="ChEBI" id="CHEBI:57856"/>
        <dbReference type="ChEBI" id="CHEBI:59789"/>
        <dbReference type="ChEBI" id="CHEBI:74483"/>
        <dbReference type="ChEBI" id="CHEBI:82748"/>
    </reaction>
    <physiologicalReaction direction="left-to-right" evidence="1">
        <dbReference type="Rhea" id="RHEA:61489"/>
    </physiologicalReaction>
</comment>
<comment type="catalytic activity">
    <reaction evidence="1">
        <text>cytidine(34) in tRNA precursor + S-adenosyl-L-methionine = 5-methylcytidine(34) in tRNA precursor + S-adenosyl-L-homocysteine + H(+)</text>
        <dbReference type="Rhea" id="RHEA:42940"/>
        <dbReference type="Rhea" id="RHEA-COMP:10291"/>
        <dbReference type="Rhea" id="RHEA-COMP:10295"/>
        <dbReference type="ChEBI" id="CHEBI:15378"/>
        <dbReference type="ChEBI" id="CHEBI:57856"/>
        <dbReference type="ChEBI" id="CHEBI:59789"/>
        <dbReference type="ChEBI" id="CHEBI:74483"/>
        <dbReference type="ChEBI" id="CHEBI:82748"/>
        <dbReference type="EC" id="2.1.1.203"/>
    </reaction>
    <physiologicalReaction direction="left-to-right" evidence="1">
        <dbReference type="Rhea" id="RHEA:42941"/>
    </physiologicalReaction>
</comment>
<comment type="catalytic activity">
    <reaction evidence="1">
        <text>a cytidine in mRNA + S-adenosyl-L-methionine = a 5-methylcytidine in mRNA + S-adenosyl-L-homocysteine + H(+)</text>
        <dbReference type="Rhea" id="RHEA:61464"/>
        <dbReference type="Rhea" id="RHEA-COMP:15145"/>
        <dbReference type="Rhea" id="RHEA-COMP:15826"/>
        <dbReference type="ChEBI" id="CHEBI:15378"/>
        <dbReference type="ChEBI" id="CHEBI:57856"/>
        <dbReference type="ChEBI" id="CHEBI:59789"/>
        <dbReference type="ChEBI" id="CHEBI:74483"/>
        <dbReference type="ChEBI" id="CHEBI:82748"/>
    </reaction>
    <physiologicalReaction direction="left-to-right" evidence="1">
        <dbReference type="Rhea" id="RHEA:61465"/>
    </physiologicalReaction>
</comment>
<comment type="subcellular location">
    <subcellularLocation>
        <location evidence="1">Nucleus</location>
        <location evidence="1">Nucleolus</location>
    </subcellularLocation>
    <subcellularLocation>
        <location evidence="1">Cytoplasm</location>
    </subcellularLocation>
    <subcellularLocation>
        <location evidence="1">Mitochondrion</location>
    </subcellularLocation>
    <subcellularLocation>
        <location evidence="1">Cytoplasm</location>
        <location evidence="1">Cytoskeleton</location>
        <location evidence="1">Spindle</location>
    </subcellularLocation>
    <subcellularLocation>
        <location evidence="2">Secreted</location>
        <location evidence="2">Extracellular exosome</location>
    </subcellularLocation>
</comment>
<comment type="similarity">
    <text evidence="3">Belongs to the class I-like SAM-binding methyltransferase superfamily. RsmB/NOP family. TRM4 subfamily.</text>
</comment>
<keyword id="KW-0963">Cytoplasm</keyword>
<keyword id="KW-0206">Cytoskeleton</keyword>
<keyword id="KW-0489">Methyltransferase</keyword>
<keyword id="KW-0496">Mitochondrion</keyword>
<keyword id="KW-0539">Nucleus</keyword>
<keyword id="KW-0597">Phosphoprotein</keyword>
<keyword id="KW-1185">Reference proteome</keyword>
<keyword id="KW-0694">RNA-binding</keyword>
<keyword id="KW-0949">S-adenosyl-L-methionine</keyword>
<keyword id="KW-0964">Secreted</keyword>
<keyword id="KW-0808">Transferase</keyword>
<keyword id="KW-0819">tRNA processing</keyword>
<keyword id="KW-0820">tRNA-binding</keyword>
<proteinExistence type="evidence at transcript level"/>
<name>NSUN2_XENTR</name>
<gene>
    <name evidence="1" type="primary">nsun2</name>
    <name evidence="5" type="ORF">TEgg048n02.1</name>
</gene>
<sequence length="798" mass="91020">MGRRNRRNRQRHQRSTEQRSPAEEEQRRKAREQAAWECGYPEIIKENKLFEHYYQELKIVPDGEWDKFMASLREPLPATIRITGYKSHAKEILHCLKEKYFKELQDIEVDGQKIEAPQPLSWYPEELAWHTNLSRKIIRKSPELEKFHQFLVNETESGNISRQEAVSMIPPVLLKVQPHHKILDMCAAPGSKTAQIIEMLHADMNVPFPEGFVIANDVDNKRCYLLVHQAKRLNSPCIMVVNHDASSIPRLLVENNGSREVLYYDRILCDVPCSGDGTLRKNIDVWKKWTTLNSLQLHGLQIRIATRGVEQLAEGGRMVYSTCSLNPVEDEAVIASLLDKSEGSLELADVASEIPGLKWMPGITQWKVMTKEGHWYEKWEDIPTSRHTQIRPTMFPPKDEEKLKSMNLNRCMRILPHHQNTGGFFVAVLIKKAPMPWNKRQPKLQRRPPVSACDASIAVAPELVKAVTENSAGMADEPAVDTENGETKPCTNQSDSSKTDIVCCPPPSKKMKLFGFKEDPFVFVSEDDPIFDPIQTFYALDPSFPKKNLLTRTQEGKKRQLYMVSKELRNVLLHNSEKMKVINTGIKVLCRNNDGEQYGCAYRLAQEGIYTLYPFINARIVTVSIEDIKVLLTQENPFLSKFSKETQKQANNFDMGSIVLKYEPDPQEPETLQCPIVLCGWRGKTSIRSFVPKNERLHYLRMMGVEVFKEKAEVLEKKPVEGKACDEEHIDEKMDIDGAKEESKELSGNESGDDEDPKEEDVIDRGVLEHVALKNTSAIPASVEDQAEDASVSKESVD</sequence>